<feature type="chain" id="PRO_0000370575" description="tRNA (guanine-N(7)-)-methyltransferase">
    <location>
        <begin position="1"/>
        <end position="256"/>
    </location>
</feature>
<feature type="region of interest" description="Disordered" evidence="2">
    <location>
        <begin position="1"/>
        <end position="25"/>
    </location>
</feature>
<feature type="active site" evidence="1">
    <location>
        <position position="160"/>
    </location>
</feature>
<feature type="binding site" evidence="1">
    <location>
        <position position="79"/>
    </location>
    <ligand>
        <name>S-adenosyl-L-methionine</name>
        <dbReference type="ChEBI" id="CHEBI:59789"/>
    </ligand>
</feature>
<feature type="binding site" evidence="1">
    <location>
        <begin position="102"/>
        <end position="103"/>
    </location>
    <ligand>
        <name>S-adenosyl-L-methionine</name>
        <dbReference type="ChEBI" id="CHEBI:59789"/>
    </ligand>
</feature>
<feature type="binding site" evidence="1">
    <location>
        <begin position="137"/>
        <end position="138"/>
    </location>
    <ligand>
        <name>S-adenosyl-L-methionine</name>
        <dbReference type="ChEBI" id="CHEBI:59789"/>
    </ligand>
</feature>
<feature type="binding site" evidence="1">
    <location>
        <position position="157"/>
    </location>
    <ligand>
        <name>S-adenosyl-L-methionine</name>
        <dbReference type="ChEBI" id="CHEBI:59789"/>
    </ligand>
</feature>
<feature type="binding site" evidence="1">
    <location>
        <begin position="235"/>
        <end position="237"/>
    </location>
    <ligand>
        <name>S-adenosyl-L-methionine</name>
        <dbReference type="ChEBI" id="CHEBI:59789"/>
    </ligand>
</feature>
<reference key="1">
    <citation type="journal article" date="2007" name="Nature">
        <title>Evolution of genes and genomes on the Drosophila phylogeny.</title>
        <authorList>
            <consortium name="Drosophila 12 genomes consortium"/>
        </authorList>
    </citation>
    <scope>NUCLEOTIDE SEQUENCE [LARGE SCALE GENOMIC DNA]</scope>
</reference>
<sequence length="256" mass="29414">MVATGGQAQDQSQNQEPDVLNPTSAVTGLPQKRYYRQRAHSNPIADHSFDYPARPEDVDWRSMYPSIQQGQQVSFADVGCGYGGFLVTLGEMFPEKLSIGMEIRVKVSDYVVDRIAALRRRSADTGAYQNIACLRTNAMKYLPNYFSKGQLEKMFFLYPDPHFKRAKHKWRIINQALLSEYAYVLRKGGLVYTMTDVEDLHKWIVTHMEEHPLYERLTEEEANADPITPKLYQSSEEGAKVVRNKGDHFLAIFRRL</sequence>
<name>TRMB_DROSI</name>
<organism>
    <name type="scientific">Drosophila simulans</name>
    <name type="common">Fruit fly</name>
    <dbReference type="NCBI Taxonomy" id="7240"/>
    <lineage>
        <taxon>Eukaryota</taxon>
        <taxon>Metazoa</taxon>
        <taxon>Ecdysozoa</taxon>
        <taxon>Arthropoda</taxon>
        <taxon>Hexapoda</taxon>
        <taxon>Insecta</taxon>
        <taxon>Pterygota</taxon>
        <taxon>Neoptera</taxon>
        <taxon>Endopterygota</taxon>
        <taxon>Diptera</taxon>
        <taxon>Brachycera</taxon>
        <taxon>Muscomorpha</taxon>
        <taxon>Ephydroidea</taxon>
        <taxon>Drosophilidae</taxon>
        <taxon>Drosophila</taxon>
        <taxon>Sophophora</taxon>
    </lineage>
</organism>
<comment type="function">
    <text evidence="1">Catalyzes the formation of N(7)-methylguanine at position 46 (m7G46) in tRNA.</text>
</comment>
<comment type="catalytic activity">
    <reaction evidence="1">
        <text>guanosine(46) in tRNA + S-adenosyl-L-methionine = N(7)-methylguanosine(46) in tRNA + S-adenosyl-L-homocysteine</text>
        <dbReference type="Rhea" id="RHEA:42708"/>
        <dbReference type="Rhea" id="RHEA-COMP:10188"/>
        <dbReference type="Rhea" id="RHEA-COMP:10189"/>
        <dbReference type="ChEBI" id="CHEBI:57856"/>
        <dbReference type="ChEBI" id="CHEBI:59789"/>
        <dbReference type="ChEBI" id="CHEBI:74269"/>
        <dbReference type="ChEBI" id="CHEBI:74480"/>
        <dbReference type="EC" id="2.1.1.33"/>
    </reaction>
</comment>
<comment type="pathway">
    <text evidence="1">tRNA modification; N(7)-methylguanine-tRNA biosynthesis.</text>
</comment>
<comment type="subcellular location">
    <subcellularLocation>
        <location evidence="1">Nucleus</location>
    </subcellularLocation>
</comment>
<comment type="similarity">
    <text evidence="1">Belongs to the class I-like SAM-binding methyltransferase superfamily. TrmB family.</text>
</comment>
<keyword id="KW-0489">Methyltransferase</keyword>
<keyword id="KW-0539">Nucleus</keyword>
<keyword id="KW-1185">Reference proteome</keyword>
<keyword id="KW-0694">RNA-binding</keyword>
<keyword id="KW-0949">S-adenosyl-L-methionine</keyword>
<keyword id="KW-0808">Transferase</keyword>
<keyword id="KW-0819">tRNA processing</keyword>
<keyword id="KW-0820">tRNA-binding</keyword>
<protein>
    <recommendedName>
        <fullName evidence="1">tRNA (guanine-N(7)-)-methyltransferase</fullName>
        <ecNumber evidence="1">2.1.1.33</ecNumber>
    </recommendedName>
    <alternativeName>
        <fullName evidence="1">tRNA (guanine(46)-N(7))-methyltransferase</fullName>
    </alternativeName>
    <alternativeName>
        <fullName evidence="1">tRNA(m7G46)-methyltransferase</fullName>
    </alternativeName>
</protein>
<accession>B4R338</accession>
<evidence type="ECO:0000255" key="1">
    <source>
        <dbReference type="HAMAP-Rule" id="MF_03055"/>
    </source>
</evidence>
<evidence type="ECO:0000256" key="2">
    <source>
        <dbReference type="SAM" id="MobiDB-lite"/>
    </source>
</evidence>
<gene>
    <name type="ORF">GD16394</name>
</gene>
<dbReference type="EC" id="2.1.1.33" evidence="1"/>
<dbReference type="EMBL" id="CM000366">
    <property type="protein sequence ID" value="EDX16892.1"/>
    <property type="molecule type" value="Genomic_DNA"/>
</dbReference>
<dbReference type="SMR" id="B4R338"/>
<dbReference type="STRING" id="7240.B4R338"/>
<dbReference type="EnsemblMetazoa" id="FBtr0216304">
    <property type="protein sequence ID" value="FBpp0214796"/>
    <property type="gene ID" value="FBgn0188011"/>
</dbReference>
<dbReference type="EnsemblMetazoa" id="XM_002105915.4">
    <property type="protein sequence ID" value="XP_002105951.2"/>
    <property type="gene ID" value="LOC6724913"/>
</dbReference>
<dbReference type="HOGENOM" id="CLU_050910_3_1_1"/>
<dbReference type="OMA" id="LPNYFAK"/>
<dbReference type="OrthoDB" id="47276at2759"/>
<dbReference type="PhylomeDB" id="B4R338"/>
<dbReference type="UniPathway" id="UPA00989"/>
<dbReference type="Proteomes" id="UP000000304">
    <property type="component" value="Chromosome X"/>
</dbReference>
<dbReference type="Bgee" id="FBgn0188011">
    <property type="expression patterns" value="Expressed in embryo and 3 other cell types or tissues"/>
</dbReference>
<dbReference type="GO" id="GO:0005634">
    <property type="term" value="C:nucleus"/>
    <property type="evidence" value="ECO:0007669"/>
    <property type="project" value="UniProtKB-SubCell"/>
</dbReference>
<dbReference type="GO" id="GO:0106143">
    <property type="term" value="C:tRNA (m7G46) methyltransferase complex"/>
    <property type="evidence" value="ECO:0007669"/>
    <property type="project" value="EnsemblMetazoa"/>
</dbReference>
<dbReference type="GO" id="GO:0008176">
    <property type="term" value="F:tRNA (guanine(46)-N7)-methyltransferase activity"/>
    <property type="evidence" value="ECO:0007669"/>
    <property type="project" value="UniProtKB-UniRule"/>
</dbReference>
<dbReference type="GO" id="GO:0000049">
    <property type="term" value="F:tRNA binding"/>
    <property type="evidence" value="ECO:0007669"/>
    <property type="project" value="UniProtKB-UniRule"/>
</dbReference>
<dbReference type="FunFam" id="3.40.50.150:FF:000158">
    <property type="entry name" value="tRNA (guanine-N(7)-)-methyltransferase"/>
    <property type="match status" value="1"/>
</dbReference>
<dbReference type="Gene3D" id="3.40.50.150">
    <property type="entry name" value="Vaccinia Virus protein VP39"/>
    <property type="match status" value="1"/>
</dbReference>
<dbReference type="HAMAP" id="MF_03055">
    <property type="entry name" value="tRNA_methyltr_TrmB_euk"/>
    <property type="match status" value="1"/>
</dbReference>
<dbReference type="InterPro" id="IPR029063">
    <property type="entry name" value="SAM-dependent_MTases_sf"/>
</dbReference>
<dbReference type="InterPro" id="IPR025763">
    <property type="entry name" value="Trm8_euk"/>
</dbReference>
<dbReference type="InterPro" id="IPR003358">
    <property type="entry name" value="tRNA_(Gua-N-7)_MeTrfase_Trmb"/>
</dbReference>
<dbReference type="NCBIfam" id="TIGR00091">
    <property type="entry name" value="tRNA (guanosine(46)-N7)-methyltransferase TrmB"/>
    <property type="match status" value="1"/>
</dbReference>
<dbReference type="PANTHER" id="PTHR23417">
    <property type="entry name" value="3-DEOXY-D-MANNO-OCTULOSONIC-ACID TRANSFERASE/TRNA GUANINE-N 7 - -METHYLTRANSFERASE"/>
    <property type="match status" value="1"/>
</dbReference>
<dbReference type="PANTHER" id="PTHR23417:SF16">
    <property type="entry name" value="TRNA (GUANINE-N(7)-)-METHYLTRANSFERASE"/>
    <property type="match status" value="1"/>
</dbReference>
<dbReference type="Pfam" id="PF02390">
    <property type="entry name" value="Methyltransf_4"/>
    <property type="match status" value="1"/>
</dbReference>
<dbReference type="SUPFAM" id="SSF53335">
    <property type="entry name" value="S-adenosyl-L-methionine-dependent methyltransferases"/>
    <property type="match status" value="1"/>
</dbReference>
<dbReference type="PROSITE" id="PS51625">
    <property type="entry name" value="SAM_MT_TRMB"/>
    <property type="match status" value="1"/>
</dbReference>
<proteinExistence type="inferred from homology"/>